<reference key="1">
    <citation type="journal article" date="1994" name="Nature">
        <title>2.2 Mb of contiguous nucleotide sequence from chromosome III of C. elegans.</title>
        <authorList>
            <person name="Wilson R."/>
            <person name="Ainscough R."/>
            <person name="Anderson K."/>
            <person name="Baynes C."/>
            <person name="Berks M."/>
            <person name="Bonfield J."/>
            <person name="Burton J."/>
            <person name="Connell M."/>
            <person name="Copsey T."/>
            <person name="Cooper J."/>
            <person name="Coulson A."/>
            <person name="Craxton M."/>
            <person name="Dear S."/>
            <person name="Du Z."/>
            <person name="Durbin R."/>
            <person name="Favello A."/>
            <person name="Fraser A."/>
            <person name="Fulton L."/>
            <person name="Gardner A."/>
            <person name="Green P."/>
            <person name="Hawkins T."/>
            <person name="Hillier L."/>
            <person name="Jier M."/>
            <person name="Johnston L."/>
            <person name="Jones M."/>
            <person name="Kershaw J."/>
            <person name="Kirsten J."/>
            <person name="Laisster N."/>
            <person name="Latreille P."/>
            <person name="Lightning J."/>
            <person name="Lloyd C."/>
            <person name="Mortimore B."/>
            <person name="O'Callaghan M."/>
            <person name="Parsons J."/>
            <person name="Percy C."/>
            <person name="Rifken L."/>
            <person name="Roopra A."/>
            <person name="Saunders D."/>
            <person name="Shownkeen R."/>
            <person name="Sims M."/>
            <person name="Smaldon N."/>
            <person name="Smith A."/>
            <person name="Smith M."/>
            <person name="Sonnhammer E."/>
            <person name="Staden R."/>
            <person name="Sulston J."/>
            <person name="Thierry-Mieg J."/>
            <person name="Thomas K."/>
            <person name="Vaudin M."/>
            <person name="Vaughan K."/>
            <person name="Waterston R."/>
            <person name="Watson A."/>
            <person name="Weinstock L."/>
            <person name="Wilkinson-Sproat J."/>
            <person name="Wohldman P."/>
        </authorList>
    </citation>
    <scope>NUCLEOTIDE SEQUENCE [LARGE SCALE GENOMIC DNA]</scope>
    <source>
        <strain>Bristol N2</strain>
    </source>
</reference>
<reference key="2">
    <citation type="journal article" date="1998" name="Science">
        <title>Genome sequence of the nematode C. elegans: a platform for investigating biology.</title>
        <authorList>
            <consortium name="The C. elegans sequencing consortium"/>
        </authorList>
    </citation>
    <scope>NUCLEOTIDE SEQUENCE [LARGE SCALE GENOMIC DNA]</scope>
    <source>
        <strain>Bristol N2</strain>
    </source>
</reference>
<name>YLU1_CAEEL</name>
<keyword id="KW-1185">Reference proteome</keyword>
<organism>
    <name type="scientific">Caenorhabditis elegans</name>
    <dbReference type="NCBI Taxonomy" id="6239"/>
    <lineage>
        <taxon>Eukaryota</taxon>
        <taxon>Metazoa</taxon>
        <taxon>Ecdysozoa</taxon>
        <taxon>Nematoda</taxon>
        <taxon>Chromadorea</taxon>
        <taxon>Rhabditida</taxon>
        <taxon>Rhabditina</taxon>
        <taxon>Rhabditomorpha</taxon>
        <taxon>Rhabditoidea</taxon>
        <taxon>Rhabditidae</taxon>
        <taxon>Peloderinae</taxon>
        <taxon>Caenorhabditis</taxon>
    </lineage>
</organism>
<gene>
    <name type="ORF">F10E9.1</name>
</gene>
<proteinExistence type="predicted"/>
<dbReference type="EMBL" id="FO081105">
    <property type="protein sequence ID" value="CCD69128.1"/>
    <property type="molecule type" value="Genomic_DNA"/>
</dbReference>
<dbReference type="PIR" id="S44799">
    <property type="entry name" value="S44799"/>
</dbReference>
<dbReference type="RefSeq" id="NP_498831.1">
    <property type="nucleotide sequence ID" value="NM_066430.3"/>
</dbReference>
<dbReference type="SMR" id="P34395"/>
<dbReference type="FunCoup" id="P34395">
    <property type="interactions" value="310"/>
</dbReference>
<dbReference type="STRING" id="6239.F10E9.1.1"/>
<dbReference type="PaxDb" id="6239-F10E9.1"/>
<dbReference type="EnsemblMetazoa" id="F10E9.1.1">
    <property type="protein sequence ID" value="F10E9.1.1"/>
    <property type="gene ID" value="WBGene00017353"/>
</dbReference>
<dbReference type="GeneID" id="184303"/>
<dbReference type="KEGG" id="cel:CELE_F10E9.1"/>
<dbReference type="UCSC" id="F10E9.1">
    <property type="organism name" value="c. elegans"/>
</dbReference>
<dbReference type="AGR" id="WB:WBGene00017353"/>
<dbReference type="CTD" id="184303"/>
<dbReference type="WormBase" id="F10E9.1">
    <property type="protein sequence ID" value="CE00145"/>
    <property type="gene ID" value="WBGene00017353"/>
</dbReference>
<dbReference type="eggNOG" id="ENOG502THX3">
    <property type="taxonomic scope" value="Eukaryota"/>
</dbReference>
<dbReference type="HOGENOM" id="CLU_1349974_0_0_1"/>
<dbReference type="InParanoid" id="P34395"/>
<dbReference type="OMA" id="ICYAWIS"/>
<dbReference type="OrthoDB" id="5778160at2759"/>
<dbReference type="PRO" id="PR:P34395"/>
<dbReference type="Proteomes" id="UP000001940">
    <property type="component" value="Chromosome III"/>
</dbReference>
<dbReference type="Bgee" id="WBGene00017353">
    <property type="expression patterns" value="Expressed in pharyngeal muscle cell (C elegans) and 3 other cell types or tissues"/>
</dbReference>
<accession>P34395</accession>
<protein>
    <recommendedName>
        <fullName>Uncharacterized protein F10E9.1</fullName>
    </recommendedName>
</protein>
<feature type="chain" id="PRO_0000065285" description="Uncharacterized protein F10E9.1">
    <location>
        <begin position="1"/>
        <end position="197"/>
    </location>
</feature>
<sequence>MTFEILELLDKTAVRKPLQKQLNFSLRFHQICYAWISVSTIWYIFFSAWFIRAAGYIFSGITVSIAFLLSIAFFCEADGKGWKKFVTLCIICAAPRLFFTPIYAVANIQTSHANNTMEFIEEFHNLGIMGFKDNKYNDISIIWFVYYYNFMLVFLAIQRLFCRKAVEEKKMKIFADTLREEQQKRTENEEAVGPLHI</sequence>